<sequence>MSLRFVIGRAGSGKSTLCLREVQEELKQRPRGKTILYLVPEQMTFQTQQALIGSEDVRGSIRAQVFSFSRLAWKVLQEVGGASRLHIDEAGVHMLLRKIVESRKDGLSVFQKAAEQNGFFEHLGSMIAEFKRYNVTPSNVYEMWQQLDAHSSSAEQKLLANKVYDLQLLYDDFERALIGKYLDSEDYLQLLVEKLPQSEYVNGAEIYIDGFHSFSPQELEIVRQLMICGARVTITLTIDEKTLAQPVNELDLFYETTLTYEKIKQVAREEKIEIEKTIPLMEQPRFHSPALAHLEAHYEARPNEKFNGQASVTISTAANLRAEVEGVAREIRKLVANEKYRYRDIAVLLRNGESYYDVMRTLFTDYNIPHFIDEKRPMSHHPLVECIRSALEIISGNWRYDAVFRCVKTELLYPLDVRKETMREEMDKFENYCLAYGVQGKRWTSEDPWMYRRYRSLDDTNGMITDSEREMEEKINRLRDVVRTPVIRMQKRLKRAGTVMQMCEVVYLFLEELDVPKKLEELRIRAEESGDFLFATDHEQVWEEVMSLLDTFVEMLGEEKMSLSMFTDVMSTGLEALQFANIPPSLDQVLIANIDHSRLSDVKATFIIGVNEGVIPAAPMDEGMLSDEEREVLGAAGIELAPTTRQTLLEEQFVMYQMVTRASERLYISCPLADEEGKTLLASSFIKKIKRMFPNVKDSFITNDVNDLSRSEQISYVATPEVTLSYVMQQLQTWKRYGFEGNLDFWWDVYNFYVTSDEWKQKSSRVLSSLFYRNRAKKLSTAVSRDLYGDIIKGSVSRMELFNRCAYAHFAQHGLSLRERDIFKLDAPDIGELFHAALKKIADKLLRENRTWSDLSIKECEHLSVLVIEEIAPLLQRQILLSSNRHFYLKQKLQQIIFRTSIILREHAKSSGFVPVDLEVPFGMGGTGSLPPMEFSLPNGVKMEVVGRIDRVDKAEDENGTFLRIIDYKSSSKALDLTEVYYGLALQMLTYLDVVTSNAQMWMKKGQAASPAGVLYFHIHNPIVEMKGDASEAEIEKEILKKFKMKGLVLGDADVVRLMDNKLSTGSSDIISAGLKKDGSFSARSSIASEQEFNVLQKYVHHTFENIGKDITEGVIDIAPYKMGNKAACTFCNFKSVCQFDESLEDNQFRTLKDMKDSEAMEKIREEVGGE</sequence>
<keyword id="KW-0004">4Fe-4S</keyword>
<keyword id="KW-0067">ATP-binding</keyword>
<keyword id="KW-0227">DNA damage</keyword>
<keyword id="KW-0234">DNA repair</keyword>
<keyword id="KW-0238">DNA-binding</keyword>
<keyword id="KW-0269">Exonuclease</keyword>
<keyword id="KW-0347">Helicase</keyword>
<keyword id="KW-0378">Hydrolase</keyword>
<keyword id="KW-0408">Iron</keyword>
<keyword id="KW-0411">Iron-sulfur</keyword>
<keyword id="KW-0479">Metal-binding</keyword>
<keyword id="KW-0540">Nuclease</keyword>
<keyword id="KW-0547">Nucleotide-binding</keyword>
<comment type="function">
    <text evidence="1">The heterodimer acts as both an ATP-dependent DNA helicase and an ATP-dependent, dual-direction single-stranded exonuclease. Recognizes the chi site generating a DNA molecule suitable for the initiation of homologous recombination. The AddB subunit has 5' -&gt; 3' nuclease activity but not helicase activity.</text>
</comment>
<comment type="cofactor">
    <cofactor evidence="1">
        <name>Mg(2+)</name>
        <dbReference type="ChEBI" id="CHEBI:18420"/>
    </cofactor>
</comment>
<comment type="cofactor">
    <cofactor evidence="1">
        <name>[4Fe-4S] cluster</name>
        <dbReference type="ChEBI" id="CHEBI:49883"/>
    </cofactor>
    <text evidence="1">Binds 1 [4Fe-4S] cluster.</text>
</comment>
<comment type="subunit">
    <text evidence="1">Heterodimer of AddA and AddB.</text>
</comment>
<comment type="miscellaneous">
    <text evidence="1">Despite having conserved helicase domains, this subunit does not have helicase activity.</text>
</comment>
<comment type="similarity">
    <text evidence="1">Belongs to the helicase family. AddB/RexB type 1 subfamily.</text>
</comment>
<reference key="1">
    <citation type="submission" date="2008-10" db="EMBL/GenBank/DDBJ databases">
        <title>Genome sequence of Bacillus cereus G9842.</title>
        <authorList>
            <person name="Dodson R.J."/>
            <person name="Durkin A.S."/>
            <person name="Rosovitz M.J."/>
            <person name="Rasko D.A."/>
            <person name="Hoffmaster A."/>
            <person name="Ravel J."/>
            <person name="Sutton G."/>
        </authorList>
    </citation>
    <scope>NUCLEOTIDE SEQUENCE [LARGE SCALE GENOMIC DNA]</scope>
    <source>
        <strain>G9842</strain>
    </source>
</reference>
<feature type="chain" id="PRO_0000379158" description="ATP-dependent helicase/deoxyribonuclease subunit B">
    <location>
        <begin position="1"/>
        <end position="1171"/>
    </location>
</feature>
<feature type="domain" description="UvrD-like helicase ATP-binding" evidence="1">
    <location>
        <begin position="1"/>
        <end position="287"/>
    </location>
</feature>
<feature type="domain" description="UvrD-like helicase C-terminal" evidence="1">
    <location>
        <begin position="281"/>
        <end position="587"/>
    </location>
</feature>
<feature type="binding site" evidence="1">
    <location>
        <begin position="8"/>
        <end position="15"/>
    </location>
    <ligand>
        <name>ATP</name>
        <dbReference type="ChEBI" id="CHEBI:30616"/>
    </ligand>
</feature>
<feature type="binding site" evidence="1">
    <location>
        <position position="805"/>
    </location>
    <ligand>
        <name>[4Fe-4S] cluster</name>
        <dbReference type="ChEBI" id="CHEBI:49883"/>
    </ligand>
</feature>
<feature type="binding site" evidence="1">
    <location>
        <position position="1129"/>
    </location>
    <ligand>
        <name>[4Fe-4S] cluster</name>
        <dbReference type="ChEBI" id="CHEBI:49883"/>
    </ligand>
</feature>
<feature type="binding site" evidence="1">
    <location>
        <position position="1132"/>
    </location>
    <ligand>
        <name>[4Fe-4S] cluster</name>
        <dbReference type="ChEBI" id="CHEBI:49883"/>
    </ligand>
</feature>
<feature type="binding site" evidence="1">
    <location>
        <position position="1138"/>
    </location>
    <ligand>
        <name>[4Fe-4S] cluster</name>
        <dbReference type="ChEBI" id="CHEBI:49883"/>
    </ligand>
</feature>
<gene>
    <name evidence="1" type="primary">addB</name>
    <name type="ordered locus">BCG9842_B4149</name>
</gene>
<dbReference type="EC" id="3.1.-.-" evidence="1"/>
<dbReference type="EMBL" id="CP001186">
    <property type="protein sequence ID" value="ACK94561.1"/>
    <property type="molecule type" value="Genomic_DNA"/>
</dbReference>
<dbReference type="RefSeq" id="WP_000058604.1">
    <property type="nucleotide sequence ID" value="NC_011772.1"/>
</dbReference>
<dbReference type="SMR" id="B7IL83"/>
<dbReference type="KEGG" id="bcg:BCG9842_B4149"/>
<dbReference type="HOGENOM" id="CLU_007838_0_0_9"/>
<dbReference type="Proteomes" id="UP000006744">
    <property type="component" value="Chromosome"/>
</dbReference>
<dbReference type="GO" id="GO:0051539">
    <property type="term" value="F:4 iron, 4 sulfur cluster binding"/>
    <property type="evidence" value="ECO:0007669"/>
    <property type="project" value="UniProtKB-KW"/>
</dbReference>
<dbReference type="GO" id="GO:0008409">
    <property type="term" value="F:5'-3' exonuclease activity"/>
    <property type="evidence" value="ECO:0007669"/>
    <property type="project" value="UniProtKB-UniRule"/>
</dbReference>
<dbReference type="GO" id="GO:0005524">
    <property type="term" value="F:ATP binding"/>
    <property type="evidence" value="ECO:0007669"/>
    <property type="project" value="UniProtKB-UniRule"/>
</dbReference>
<dbReference type="GO" id="GO:0003690">
    <property type="term" value="F:double-stranded DNA binding"/>
    <property type="evidence" value="ECO:0007669"/>
    <property type="project" value="UniProtKB-UniRule"/>
</dbReference>
<dbReference type="GO" id="GO:0004386">
    <property type="term" value="F:helicase activity"/>
    <property type="evidence" value="ECO:0007669"/>
    <property type="project" value="UniProtKB-KW"/>
</dbReference>
<dbReference type="GO" id="GO:0046872">
    <property type="term" value="F:metal ion binding"/>
    <property type="evidence" value="ECO:0007669"/>
    <property type="project" value="UniProtKB-KW"/>
</dbReference>
<dbReference type="GO" id="GO:0000724">
    <property type="term" value="P:double-strand break repair via homologous recombination"/>
    <property type="evidence" value="ECO:0007669"/>
    <property type="project" value="UniProtKB-UniRule"/>
</dbReference>
<dbReference type="FunFam" id="3.40.50.300:FF:001679">
    <property type="entry name" value="ATP-dependent helicase/deoxyribonuclease subunit B"/>
    <property type="match status" value="1"/>
</dbReference>
<dbReference type="FunFam" id="3.40.50.300:FF:001705">
    <property type="entry name" value="ATP-dependent helicase/deoxyribonuclease subunit B"/>
    <property type="match status" value="1"/>
</dbReference>
<dbReference type="FunFam" id="3.40.50.300:FF:001739">
    <property type="entry name" value="ATP-dependent helicase/deoxyribonuclease subunit B"/>
    <property type="match status" value="1"/>
</dbReference>
<dbReference type="FunFam" id="3.90.320.10:FF:000006">
    <property type="entry name" value="ATP-dependent helicase/deoxyribonuclease subunit B"/>
    <property type="match status" value="1"/>
</dbReference>
<dbReference type="Gene3D" id="3.90.320.10">
    <property type="match status" value="1"/>
</dbReference>
<dbReference type="Gene3D" id="6.10.140.1030">
    <property type="match status" value="1"/>
</dbReference>
<dbReference type="Gene3D" id="3.40.50.300">
    <property type="entry name" value="P-loop containing nucleotide triphosphate hydrolases"/>
    <property type="match status" value="4"/>
</dbReference>
<dbReference type="HAMAP" id="MF_01452">
    <property type="entry name" value="AddB_type1"/>
    <property type="match status" value="1"/>
</dbReference>
<dbReference type="InterPro" id="IPR049035">
    <property type="entry name" value="ADDB_N"/>
</dbReference>
<dbReference type="InterPro" id="IPR014140">
    <property type="entry name" value="DNA_helicase_suAddB"/>
</dbReference>
<dbReference type="InterPro" id="IPR014017">
    <property type="entry name" value="DNA_helicase_UvrD-like_C"/>
</dbReference>
<dbReference type="InterPro" id="IPR027417">
    <property type="entry name" value="P-loop_NTPase"/>
</dbReference>
<dbReference type="InterPro" id="IPR011604">
    <property type="entry name" value="PDDEXK-like_dom_sf"/>
</dbReference>
<dbReference type="InterPro" id="IPR038726">
    <property type="entry name" value="PDDEXK_AddAB-type"/>
</dbReference>
<dbReference type="NCBIfam" id="TIGR02773">
    <property type="entry name" value="addB_Gpos"/>
    <property type="match status" value="1"/>
</dbReference>
<dbReference type="PANTHER" id="PTHR30591">
    <property type="entry name" value="RECBCD ENZYME SUBUNIT RECC"/>
    <property type="match status" value="1"/>
</dbReference>
<dbReference type="PANTHER" id="PTHR30591:SF1">
    <property type="entry name" value="RECBCD ENZYME SUBUNIT RECC"/>
    <property type="match status" value="1"/>
</dbReference>
<dbReference type="Pfam" id="PF21445">
    <property type="entry name" value="ADDB_N"/>
    <property type="match status" value="1"/>
</dbReference>
<dbReference type="Pfam" id="PF12705">
    <property type="entry name" value="PDDEXK_1"/>
    <property type="match status" value="1"/>
</dbReference>
<dbReference type="Pfam" id="PF13361">
    <property type="entry name" value="UvrD_C"/>
    <property type="match status" value="1"/>
</dbReference>
<dbReference type="SUPFAM" id="SSF52540">
    <property type="entry name" value="P-loop containing nucleoside triphosphate hydrolases"/>
    <property type="match status" value="1"/>
</dbReference>
<dbReference type="PROSITE" id="PS51198">
    <property type="entry name" value="UVRD_HELICASE_ATP_BIND"/>
    <property type="match status" value="1"/>
</dbReference>
<dbReference type="PROSITE" id="PS51217">
    <property type="entry name" value="UVRD_HELICASE_CTER"/>
    <property type="match status" value="1"/>
</dbReference>
<evidence type="ECO:0000255" key="1">
    <source>
        <dbReference type="HAMAP-Rule" id="MF_01452"/>
    </source>
</evidence>
<name>ADDB_BACC2</name>
<organism>
    <name type="scientific">Bacillus cereus (strain G9842)</name>
    <dbReference type="NCBI Taxonomy" id="405531"/>
    <lineage>
        <taxon>Bacteria</taxon>
        <taxon>Bacillati</taxon>
        <taxon>Bacillota</taxon>
        <taxon>Bacilli</taxon>
        <taxon>Bacillales</taxon>
        <taxon>Bacillaceae</taxon>
        <taxon>Bacillus</taxon>
        <taxon>Bacillus cereus group</taxon>
    </lineage>
</organism>
<accession>B7IL83</accession>
<proteinExistence type="inferred from homology"/>
<protein>
    <recommendedName>
        <fullName evidence="1">ATP-dependent helicase/deoxyribonuclease subunit B</fullName>
        <ecNumber evidence="1">3.1.-.-</ecNumber>
    </recommendedName>
    <alternativeName>
        <fullName evidence="1">ATP-dependent helicase/nuclease subunit AddB</fullName>
    </alternativeName>
</protein>